<dbReference type="EC" id="3.6.5.-" evidence="1"/>
<dbReference type="EMBL" id="AM040264">
    <property type="protein sequence ID" value="CAJ11809.1"/>
    <property type="molecule type" value="Genomic_DNA"/>
</dbReference>
<dbReference type="SMR" id="Q2YLM2"/>
<dbReference type="STRING" id="359391.BAB1_1853"/>
<dbReference type="KEGG" id="bmf:BAB1_1853"/>
<dbReference type="PATRIC" id="fig|359391.11.peg.368"/>
<dbReference type="HOGENOM" id="CLU_011747_2_0_5"/>
<dbReference type="PhylomeDB" id="Q2YLM2"/>
<dbReference type="Proteomes" id="UP000002719">
    <property type="component" value="Chromosome I"/>
</dbReference>
<dbReference type="GO" id="GO:0005737">
    <property type="term" value="C:cytoplasm"/>
    <property type="evidence" value="ECO:0007669"/>
    <property type="project" value="UniProtKB-SubCell"/>
</dbReference>
<dbReference type="GO" id="GO:0005525">
    <property type="term" value="F:GTP binding"/>
    <property type="evidence" value="ECO:0007669"/>
    <property type="project" value="UniProtKB-UniRule"/>
</dbReference>
<dbReference type="GO" id="GO:0003924">
    <property type="term" value="F:GTPase activity"/>
    <property type="evidence" value="ECO:0007669"/>
    <property type="project" value="UniProtKB-UniRule"/>
</dbReference>
<dbReference type="GO" id="GO:0000287">
    <property type="term" value="F:magnesium ion binding"/>
    <property type="evidence" value="ECO:0007669"/>
    <property type="project" value="InterPro"/>
</dbReference>
<dbReference type="GO" id="GO:0042254">
    <property type="term" value="P:ribosome biogenesis"/>
    <property type="evidence" value="ECO:0007669"/>
    <property type="project" value="UniProtKB-UniRule"/>
</dbReference>
<dbReference type="CDD" id="cd01898">
    <property type="entry name" value="Obg"/>
    <property type="match status" value="1"/>
</dbReference>
<dbReference type="FunFam" id="2.70.210.12:FF:000001">
    <property type="entry name" value="GTPase Obg"/>
    <property type="match status" value="1"/>
</dbReference>
<dbReference type="Gene3D" id="2.70.210.12">
    <property type="entry name" value="GTP1/OBG domain"/>
    <property type="match status" value="1"/>
</dbReference>
<dbReference type="Gene3D" id="3.40.50.300">
    <property type="entry name" value="P-loop containing nucleotide triphosphate hydrolases"/>
    <property type="match status" value="1"/>
</dbReference>
<dbReference type="HAMAP" id="MF_01454">
    <property type="entry name" value="GTPase_Obg"/>
    <property type="match status" value="1"/>
</dbReference>
<dbReference type="InterPro" id="IPR031167">
    <property type="entry name" value="G_OBG"/>
</dbReference>
<dbReference type="InterPro" id="IPR006073">
    <property type="entry name" value="GTP-bd"/>
</dbReference>
<dbReference type="InterPro" id="IPR014100">
    <property type="entry name" value="GTP-bd_Obg/CgtA"/>
</dbReference>
<dbReference type="InterPro" id="IPR006074">
    <property type="entry name" value="GTP1-OBG_CS"/>
</dbReference>
<dbReference type="InterPro" id="IPR006169">
    <property type="entry name" value="GTP1_OBG_dom"/>
</dbReference>
<dbReference type="InterPro" id="IPR036726">
    <property type="entry name" value="GTP1_OBG_dom_sf"/>
</dbReference>
<dbReference type="InterPro" id="IPR045086">
    <property type="entry name" value="OBG_GTPase"/>
</dbReference>
<dbReference type="InterPro" id="IPR027417">
    <property type="entry name" value="P-loop_NTPase"/>
</dbReference>
<dbReference type="NCBIfam" id="TIGR02729">
    <property type="entry name" value="Obg_CgtA"/>
    <property type="match status" value="1"/>
</dbReference>
<dbReference type="NCBIfam" id="NF008955">
    <property type="entry name" value="PRK12297.1"/>
    <property type="match status" value="1"/>
</dbReference>
<dbReference type="NCBIfam" id="NF008956">
    <property type="entry name" value="PRK12299.1"/>
    <property type="match status" value="1"/>
</dbReference>
<dbReference type="PANTHER" id="PTHR11702">
    <property type="entry name" value="DEVELOPMENTALLY REGULATED GTP-BINDING PROTEIN-RELATED"/>
    <property type="match status" value="1"/>
</dbReference>
<dbReference type="PANTHER" id="PTHR11702:SF31">
    <property type="entry name" value="MITOCHONDRIAL RIBOSOME-ASSOCIATED GTPASE 2"/>
    <property type="match status" value="1"/>
</dbReference>
<dbReference type="Pfam" id="PF01018">
    <property type="entry name" value="GTP1_OBG"/>
    <property type="match status" value="1"/>
</dbReference>
<dbReference type="Pfam" id="PF01926">
    <property type="entry name" value="MMR_HSR1"/>
    <property type="match status" value="1"/>
</dbReference>
<dbReference type="PIRSF" id="PIRSF002401">
    <property type="entry name" value="GTP_bd_Obg/CgtA"/>
    <property type="match status" value="1"/>
</dbReference>
<dbReference type="PRINTS" id="PR00326">
    <property type="entry name" value="GTP1OBG"/>
</dbReference>
<dbReference type="SUPFAM" id="SSF82051">
    <property type="entry name" value="Obg GTP-binding protein N-terminal domain"/>
    <property type="match status" value="1"/>
</dbReference>
<dbReference type="SUPFAM" id="SSF52540">
    <property type="entry name" value="P-loop containing nucleoside triphosphate hydrolases"/>
    <property type="match status" value="1"/>
</dbReference>
<dbReference type="PROSITE" id="PS51710">
    <property type="entry name" value="G_OBG"/>
    <property type="match status" value="1"/>
</dbReference>
<dbReference type="PROSITE" id="PS00905">
    <property type="entry name" value="GTP1_OBG"/>
    <property type="match status" value="1"/>
</dbReference>
<dbReference type="PROSITE" id="PS51883">
    <property type="entry name" value="OBG"/>
    <property type="match status" value="1"/>
</dbReference>
<gene>
    <name evidence="1" type="primary">obg</name>
    <name type="ordered locus">BAB1_1853</name>
</gene>
<keyword id="KW-0963">Cytoplasm</keyword>
<keyword id="KW-0342">GTP-binding</keyword>
<keyword id="KW-0378">Hydrolase</keyword>
<keyword id="KW-0460">Magnesium</keyword>
<keyword id="KW-0479">Metal-binding</keyword>
<keyword id="KW-0547">Nucleotide-binding</keyword>
<keyword id="KW-1185">Reference proteome</keyword>
<accession>Q2YLM2</accession>
<name>OBG_BRUA2</name>
<comment type="function">
    <text evidence="1">An essential GTPase which binds GTP, GDP and possibly (p)ppGpp with moderate affinity, with high nucleotide exchange rates and a fairly low GTP hydrolysis rate. Plays a role in control of the cell cycle, stress response, ribosome biogenesis and in those bacteria that undergo differentiation, in morphogenesis control.</text>
</comment>
<comment type="cofactor">
    <cofactor evidence="1">
        <name>Mg(2+)</name>
        <dbReference type="ChEBI" id="CHEBI:18420"/>
    </cofactor>
</comment>
<comment type="subunit">
    <text evidence="1">Monomer.</text>
</comment>
<comment type="subcellular location">
    <subcellularLocation>
        <location evidence="1">Cytoplasm</location>
    </subcellularLocation>
</comment>
<comment type="similarity">
    <text evidence="1">Belongs to the TRAFAC class OBG-HflX-like GTPase superfamily. OBG GTPase family.</text>
</comment>
<feature type="chain" id="PRO_0000385766" description="GTPase Obg">
    <location>
        <begin position="1"/>
        <end position="341"/>
    </location>
</feature>
<feature type="domain" description="Obg" evidence="2">
    <location>
        <begin position="1"/>
        <end position="159"/>
    </location>
</feature>
<feature type="domain" description="OBG-type G" evidence="1">
    <location>
        <begin position="160"/>
        <end position="327"/>
    </location>
</feature>
<feature type="binding site" evidence="1">
    <location>
        <begin position="166"/>
        <end position="173"/>
    </location>
    <ligand>
        <name>GTP</name>
        <dbReference type="ChEBI" id="CHEBI:37565"/>
    </ligand>
</feature>
<feature type="binding site" evidence="1">
    <location>
        <position position="173"/>
    </location>
    <ligand>
        <name>Mg(2+)</name>
        <dbReference type="ChEBI" id="CHEBI:18420"/>
    </ligand>
</feature>
<feature type="binding site" evidence="1">
    <location>
        <begin position="191"/>
        <end position="195"/>
    </location>
    <ligand>
        <name>GTP</name>
        <dbReference type="ChEBI" id="CHEBI:37565"/>
    </ligand>
</feature>
<feature type="binding site" evidence="1">
    <location>
        <position position="193"/>
    </location>
    <ligand>
        <name>Mg(2+)</name>
        <dbReference type="ChEBI" id="CHEBI:18420"/>
    </ligand>
</feature>
<feature type="binding site" evidence="1">
    <location>
        <begin position="212"/>
        <end position="215"/>
    </location>
    <ligand>
        <name>GTP</name>
        <dbReference type="ChEBI" id="CHEBI:37565"/>
    </ligand>
</feature>
<feature type="binding site" evidence="1">
    <location>
        <begin position="279"/>
        <end position="282"/>
    </location>
    <ligand>
        <name>GTP</name>
        <dbReference type="ChEBI" id="CHEBI:37565"/>
    </ligand>
</feature>
<feature type="binding site" evidence="1">
    <location>
        <begin position="308"/>
        <end position="310"/>
    </location>
    <ligand>
        <name>GTP</name>
        <dbReference type="ChEBI" id="CHEBI:37565"/>
    </ligand>
</feature>
<reference key="1">
    <citation type="journal article" date="2005" name="Infect. Immun.">
        <title>Whole-genome analyses of speciation events in pathogenic Brucellae.</title>
        <authorList>
            <person name="Chain P.S."/>
            <person name="Comerci D.J."/>
            <person name="Tolmasky M.E."/>
            <person name="Larimer F.W."/>
            <person name="Malfatti S.A."/>
            <person name="Vergez L.M."/>
            <person name="Aguero F."/>
            <person name="Land M.L."/>
            <person name="Ugalde R.A."/>
            <person name="Garcia E."/>
        </authorList>
    </citation>
    <scope>NUCLEOTIDE SEQUENCE [LARGE SCALE GENOMIC DNA]</scope>
    <source>
        <strain>2308</strain>
    </source>
</reference>
<proteinExistence type="inferred from homology"/>
<evidence type="ECO:0000255" key="1">
    <source>
        <dbReference type="HAMAP-Rule" id="MF_01454"/>
    </source>
</evidence>
<evidence type="ECO:0000255" key="2">
    <source>
        <dbReference type="PROSITE-ProRule" id="PRU01231"/>
    </source>
</evidence>
<protein>
    <recommendedName>
        <fullName evidence="1">GTPase Obg</fullName>
        <ecNumber evidence="1">3.6.5.-</ecNumber>
    </recommendedName>
    <alternativeName>
        <fullName evidence="1">GTP-binding protein Obg</fullName>
    </alternativeName>
</protein>
<sequence>MKFLDQAKIYIRSGNGGAGAVSFRREKFLEFGGPDGGDGGRGGDVWVEAVDGLNTLIDYRYQQHFKAKTGMHGMGRNMTGGKGDDVVLRVPVGTQIFEEDNETLICDITEVGQRYRLAKGGNGGFGNLHFTTSTNRAPRRANPGQEGIERTIWLRLKLIADAGLVGLPNAGKSTFLASVTAAKPKIADYPFTTLHPNLGVARIDGREFVIADIPGLIEGASEGVGLGDRFLGHVERTRVLLHLVSAQEEDVAKAYQVIRGELEAYEHGLADKPEIVALSQVDTLDPETRKAKVKALKKACGCEPLLLSAVSHEGLNDTLRQLARIIDLSRAEEAGTAQAEE</sequence>
<organism>
    <name type="scientific">Brucella abortus (strain 2308)</name>
    <dbReference type="NCBI Taxonomy" id="359391"/>
    <lineage>
        <taxon>Bacteria</taxon>
        <taxon>Pseudomonadati</taxon>
        <taxon>Pseudomonadota</taxon>
        <taxon>Alphaproteobacteria</taxon>
        <taxon>Hyphomicrobiales</taxon>
        <taxon>Brucellaceae</taxon>
        <taxon>Brucella/Ochrobactrum group</taxon>
        <taxon>Brucella</taxon>
    </lineage>
</organism>